<dbReference type="EMBL" id="CP000140">
    <property type="protein sequence ID" value="ABR42464.1"/>
    <property type="molecule type" value="Genomic_DNA"/>
</dbReference>
<dbReference type="RefSeq" id="WP_005857628.1">
    <property type="nucleotide sequence ID" value="NZ_LR215978.1"/>
</dbReference>
<dbReference type="SMR" id="A6L9V0"/>
<dbReference type="STRING" id="435591.BDI_0693"/>
<dbReference type="PaxDb" id="435591-BDI_0693"/>
<dbReference type="GeneID" id="93521632"/>
<dbReference type="KEGG" id="pdi:BDI_0693"/>
<dbReference type="eggNOG" id="COG0267">
    <property type="taxonomic scope" value="Bacteria"/>
</dbReference>
<dbReference type="HOGENOM" id="CLU_190949_3_0_10"/>
<dbReference type="BioCyc" id="PDIS435591:G1G5A-710-MONOMER"/>
<dbReference type="Proteomes" id="UP000000566">
    <property type="component" value="Chromosome"/>
</dbReference>
<dbReference type="GO" id="GO:0005737">
    <property type="term" value="C:cytoplasm"/>
    <property type="evidence" value="ECO:0007669"/>
    <property type="project" value="UniProtKB-ARBA"/>
</dbReference>
<dbReference type="GO" id="GO:1990904">
    <property type="term" value="C:ribonucleoprotein complex"/>
    <property type="evidence" value="ECO:0007669"/>
    <property type="project" value="UniProtKB-KW"/>
</dbReference>
<dbReference type="GO" id="GO:0005840">
    <property type="term" value="C:ribosome"/>
    <property type="evidence" value="ECO:0007669"/>
    <property type="project" value="UniProtKB-KW"/>
</dbReference>
<dbReference type="GO" id="GO:0003735">
    <property type="term" value="F:structural constituent of ribosome"/>
    <property type="evidence" value="ECO:0007669"/>
    <property type="project" value="InterPro"/>
</dbReference>
<dbReference type="GO" id="GO:0006412">
    <property type="term" value="P:translation"/>
    <property type="evidence" value="ECO:0007669"/>
    <property type="project" value="UniProtKB-UniRule"/>
</dbReference>
<dbReference type="Gene3D" id="2.20.28.120">
    <property type="entry name" value="Ribosomal protein L33"/>
    <property type="match status" value="1"/>
</dbReference>
<dbReference type="HAMAP" id="MF_00294">
    <property type="entry name" value="Ribosomal_bL33"/>
    <property type="match status" value="1"/>
</dbReference>
<dbReference type="InterPro" id="IPR001705">
    <property type="entry name" value="Ribosomal_bL33"/>
</dbReference>
<dbReference type="InterPro" id="IPR038584">
    <property type="entry name" value="Ribosomal_bL33_sf"/>
</dbReference>
<dbReference type="InterPro" id="IPR011332">
    <property type="entry name" value="Ribosomal_zn-bd"/>
</dbReference>
<dbReference type="NCBIfam" id="NF001764">
    <property type="entry name" value="PRK00504.1"/>
    <property type="match status" value="1"/>
</dbReference>
<dbReference type="NCBIfam" id="NF001860">
    <property type="entry name" value="PRK00595.1"/>
    <property type="match status" value="1"/>
</dbReference>
<dbReference type="NCBIfam" id="TIGR01023">
    <property type="entry name" value="rpmG_bact"/>
    <property type="match status" value="1"/>
</dbReference>
<dbReference type="PANTHER" id="PTHR43168">
    <property type="entry name" value="50S RIBOSOMAL PROTEIN L33, CHLOROPLASTIC"/>
    <property type="match status" value="1"/>
</dbReference>
<dbReference type="PANTHER" id="PTHR43168:SF2">
    <property type="entry name" value="LARGE RIBOSOMAL SUBUNIT PROTEIN BL33C"/>
    <property type="match status" value="1"/>
</dbReference>
<dbReference type="Pfam" id="PF00471">
    <property type="entry name" value="Ribosomal_L33"/>
    <property type="match status" value="1"/>
</dbReference>
<dbReference type="SUPFAM" id="SSF57829">
    <property type="entry name" value="Zn-binding ribosomal proteins"/>
    <property type="match status" value="1"/>
</dbReference>
<feature type="chain" id="PRO_1000059283" description="Large ribosomal subunit protein bL33">
    <location>
        <begin position="1"/>
        <end position="62"/>
    </location>
</feature>
<reference key="1">
    <citation type="journal article" date="2007" name="PLoS Biol.">
        <title>Evolution of symbiotic bacteria in the distal human intestine.</title>
        <authorList>
            <person name="Xu J."/>
            <person name="Mahowald M.A."/>
            <person name="Ley R.E."/>
            <person name="Lozupone C.A."/>
            <person name="Hamady M."/>
            <person name="Martens E.C."/>
            <person name="Henrissat B."/>
            <person name="Coutinho P.M."/>
            <person name="Minx P."/>
            <person name="Latreille P."/>
            <person name="Cordum H."/>
            <person name="Van Brunt A."/>
            <person name="Kim K."/>
            <person name="Fulton R.S."/>
            <person name="Fulton L.A."/>
            <person name="Clifton S.W."/>
            <person name="Wilson R.K."/>
            <person name="Knight R.D."/>
            <person name="Gordon J.I."/>
        </authorList>
    </citation>
    <scope>NUCLEOTIDE SEQUENCE [LARGE SCALE GENOMIC DNA]</scope>
    <source>
        <strain>ATCC 8503 / DSM 20701 / CIP 104284 / JCM 5825 / NCTC 11152</strain>
    </source>
</reference>
<comment type="similarity">
    <text evidence="1">Belongs to the bacterial ribosomal protein bL33 family.</text>
</comment>
<evidence type="ECO:0000255" key="1">
    <source>
        <dbReference type="HAMAP-Rule" id="MF_00294"/>
    </source>
</evidence>
<evidence type="ECO:0000305" key="2"/>
<proteinExistence type="inferred from homology"/>
<sequence>MAKKAKGNRVQVILECTEHKESGMPGMSRYITTKNRKNTTQRLELMKYNPVLKKMTLHKEIK</sequence>
<gene>
    <name evidence="1" type="primary">rpmG</name>
    <name type="ordered locus">BDI_0693</name>
</gene>
<organism>
    <name type="scientific">Parabacteroides distasonis (strain ATCC 8503 / DSM 20701 / CIP 104284 / JCM 5825 / NCTC 11152)</name>
    <dbReference type="NCBI Taxonomy" id="435591"/>
    <lineage>
        <taxon>Bacteria</taxon>
        <taxon>Pseudomonadati</taxon>
        <taxon>Bacteroidota</taxon>
        <taxon>Bacteroidia</taxon>
        <taxon>Bacteroidales</taxon>
        <taxon>Tannerellaceae</taxon>
        <taxon>Parabacteroides</taxon>
    </lineage>
</organism>
<protein>
    <recommendedName>
        <fullName evidence="1">Large ribosomal subunit protein bL33</fullName>
    </recommendedName>
    <alternativeName>
        <fullName evidence="2">50S ribosomal protein L33</fullName>
    </alternativeName>
</protein>
<keyword id="KW-1185">Reference proteome</keyword>
<keyword id="KW-0687">Ribonucleoprotein</keyword>
<keyword id="KW-0689">Ribosomal protein</keyword>
<accession>A6L9V0</accession>
<name>RL33_PARD8</name>